<comment type="similarity">
    <text evidence="1">Belongs to the UPF0401 family.</text>
</comment>
<reference key="1">
    <citation type="journal article" date="2006" name="Proc. Natl. Acad. Sci. U.S.A.">
        <title>Identification of genes subject to positive selection in uropathogenic strains of Escherichia coli: a comparative genomics approach.</title>
        <authorList>
            <person name="Chen S.L."/>
            <person name="Hung C.-S."/>
            <person name="Xu J."/>
            <person name="Reigstad C.S."/>
            <person name="Magrini V."/>
            <person name="Sabo A."/>
            <person name="Blasiar D."/>
            <person name="Bieri T."/>
            <person name="Meyer R.R."/>
            <person name="Ozersky P."/>
            <person name="Armstrong J.R."/>
            <person name="Fulton R.S."/>
            <person name="Latreille J.P."/>
            <person name="Spieth J."/>
            <person name="Hooton T.M."/>
            <person name="Mardis E.R."/>
            <person name="Hultgren S.J."/>
            <person name="Gordon J.I."/>
        </authorList>
    </citation>
    <scope>NUCLEOTIDE SEQUENCE [LARGE SCALE GENOMIC DNA]</scope>
    <source>
        <strain>UTI89 / UPEC</strain>
    </source>
</reference>
<proteinExistence type="inferred from homology"/>
<protein>
    <recommendedName>
        <fullName>UPF0401 protein UTI89_C4989</fullName>
    </recommendedName>
</protein>
<evidence type="ECO:0000305" key="1"/>
<organism>
    <name type="scientific">Escherichia coli (strain UTI89 / UPEC)</name>
    <dbReference type="NCBI Taxonomy" id="364106"/>
    <lineage>
        <taxon>Bacteria</taxon>
        <taxon>Pseudomonadati</taxon>
        <taxon>Pseudomonadota</taxon>
        <taxon>Gammaproteobacteria</taxon>
        <taxon>Enterobacterales</taxon>
        <taxon>Enterobacteriaceae</taxon>
        <taxon>Escherichia</taxon>
    </lineage>
</organism>
<sequence length="77" mass="8744">MSDCHPVLLPEGPFSREQAVAVTTAYRNVLIEDDQGTHFRLVIRNAGGQLRWRCWNFEPDAGKQLNSYLASEGILRQ</sequence>
<dbReference type="EMBL" id="CP000243">
    <property type="protein sequence ID" value="ABE10392.1"/>
    <property type="molecule type" value="Genomic_DNA"/>
</dbReference>
<dbReference type="RefSeq" id="WP_001278290.1">
    <property type="nucleotide sequence ID" value="NZ_CP064825.1"/>
</dbReference>
<dbReference type="SMR" id="Q1R2M2"/>
<dbReference type="KEGG" id="eci:UTI89_C4989"/>
<dbReference type="HOGENOM" id="CLU_182912_1_0_6"/>
<dbReference type="Proteomes" id="UP000001952">
    <property type="component" value="Chromosome"/>
</dbReference>
<dbReference type="Gene3D" id="3.30.160.130">
    <property type="entry name" value="ykff protein like domains"/>
    <property type="match status" value="1"/>
</dbReference>
<dbReference type="InterPro" id="IPR009253">
    <property type="entry name" value="DUF905"/>
</dbReference>
<dbReference type="InterPro" id="IPR038612">
    <property type="entry name" value="YkfF-like_sf"/>
</dbReference>
<dbReference type="Pfam" id="PF06006">
    <property type="entry name" value="DUF905"/>
    <property type="match status" value="1"/>
</dbReference>
<dbReference type="SUPFAM" id="SSF54786">
    <property type="entry name" value="YcfA/nrd intein domain"/>
    <property type="match status" value="1"/>
</dbReference>
<name>Y4989_ECOUT</name>
<accession>Q1R2M2</accession>
<feature type="chain" id="PRO_0000268742" description="UPF0401 protein UTI89_C4989">
    <location>
        <begin position="1"/>
        <end position="77"/>
    </location>
</feature>
<gene>
    <name type="ordered locus">UTI89_C4989</name>
</gene>